<sequence length="305" mass="32698">MELIFLGTSAGVPTRTRNVTAILLNLQHPTQAGLWLFDCGEGTQHQMLNTAFNPGKLDRIFISHLHGDHLFGLPGLLCSRSMAGNAQPLTIYGPKGIREFTETALRLSGSWTDYPLEIVEITAGEILNDGLRKVTAFALEHPLECYGYRIEEHDKPGALDASALKAAGVKPGPLFQDLKAGKTVTLNDGRVINGADFLAPATPGKSVAIFGDTAPCASAITLAKGVDVMVHEATLDTSMEEKANSRGHSSTRQAAQLAHNAEVGQLIITHVSSRYDDRGCQRLLAECQAIFPATALAHDFAVFTV</sequence>
<keyword id="KW-0255">Endonuclease</keyword>
<keyword id="KW-0269">Exonuclease</keyword>
<keyword id="KW-0378">Hydrolase</keyword>
<keyword id="KW-0479">Metal-binding</keyword>
<keyword id="KW-0540">Nuclease</keyword>
<keyword id="KW-1185">Reference proteome</keyword>
<keyword id="KW-0819">tRNA processing</keyword>
<keyword id="KW-0862">Zinc</keyword>
<name>RBN_CITK8</name>
<feature type="chain" id="PRO_1000070269" description="Ribonuclease BN">
    <location>
        <begin position="1"/>
        <end position="305"/>
    </location>
</feature>
<feature type="active site" description="Proton acceptor" evidence="1">
    <location>
        <position position="68"/>
    </location>
</feature>
<feature type="binding site" evidence="1">
    <location>
        <position position="64"/>
    </location>
    <ligand>
        <name>Zn(2+)</name>
        <dbReference type="ChEBI" id="CHEBI:29105"/>
        <label>1</label>
        <note>catalytic</note>
    </ligand>
</feature>
<feature type="binding site" evidence="1">
    <location>
        <position position="66"/>
    </location>
    <ligand>
        <name>Zn(2+)</name>
        <dbReference type="ChEBI" id="CHEBI:29105"/>
        <label>1</label>
        <note>catalytic</note>
    </ligand>
</feature>
<feature type="binding site" evidence="1">
    <location>
        <position position="68"/>
    </location>
    <ligand>
        <name>Zn(2+)</name>
        <dbReference type="ChEBI" id="CHEBI:29105"/>
        <label>2</label>
        <note>catalytic</note>
    </ligand>
</feature>
<feature type="binding site" evidence="1">
    <location>
        <position position="69"/>
    </location>
    <ligand>
        <name>Zn(2+)</name>
        <dbReference type="ChEBI" id="CHEBI:29105"/>
        <label>2</label>
        <note>catalytic</note>
    </ligand>
</feature>
<feature type="binding site" evidence="1">
    <location>
        <position position="141"/>
    </location>
    <ligand>
        <name>Zn(2+)</name>
        <dbReference type="ChEBI" id="CHEBI:29105"/>
        <label>1</label>
        <note>catalytic</note>
    </ligand>
</feature>
<feature type="binding site" evidence="1">
    <location>
        <position position="212"/>
    </location>
    <ligand>
        <name>Zn(2+)</name>
        <dbReference type="ChEBI" id="CHEBI:29105"/>
        <label>1</label>
        <note>catalytic</note>
    </ligand>
</feature>
<feature type="binding site" evidence="1">
    <location>
        <position position="212"/>
    </location>
    <ligand>
        <name>Zn(2+)</name>
        <dbReference type="ChEBI" id="CHEBI:29105"/>
        <label>2</label>
        <note>catalytic</note>
    </ligand>
</feature>
<feature type="binding site" evidence="1">
    <location>
        <position position="270"/>
    </location>
    <ligand>
        <name>Zn(2+)</name>
        <dbReference type="ChEBI" id="CHEBI:29105"/>
        <label>2</label>
        <note>catalytic</note>
    </ligand>
</feature>
<reference key="1">
    <citation type="submission" date="2007-08" db="EMBL/GenBank/DDBJ databases">
        <authorList>
            <consortium name="The Citrobacter koseri Genome Sequencing Project"/>
            <person name="McClelland M."/>
            <person name="Sanderson E.K."/>
            <person name="Porwollik S."/>
            <person name="Spieth J."/>
            <person name="Clifton W.S."/>
            <person name="Latreille P."/>
            <person name="Courtney L."/>
            <person name="Wang C."/>
            <person name="Pepin K."/>
            <person name="Bhonagiri V."/>
            <person name="Nash W."/>
            <person name="Johnson M."/>
            <person name="Thiruvilangam P."/>
            <person name="Wilson R."/>
        </authorList>
    </citation>
    <scope>NUCLEOTIDE SEQUENCE [LARGE SCALE GENOMIC DNA]</scope>
    <source>
        <strain>ATCC BAA-895 / CDC 4225-83 / SGSC4696</strain>
    </source>
</reference>
<accession>A8ADW5</accession>
<dbReference type="EC" id="3.1.-.-" evidence="1"/>
<dbReference type="EMBL" id="CP000822">
    <property type="protein sequence ID" value="ABV11678.1"/>
    <property type="molecule type" value="Genomic_DNA"/>
</dbReference>
<dbReference type="RefSeq" id="WP_012131503.1">
    <property type="nucleotide sequence ID" value="NC_009792.1"/>
</dbReference>
<dbReference type="SMR" id="A8ADW5"/>
<dbReference type="STRING" id="290338.CKO_00522"/>
<dbReference type="GeneID" id="45134764"/>
<dbReference type="KEGG" id="cko:CKO_00522"/>
<dbReference type="HOGENOM" id="CLU_031317_2_0_6"/>
<dbReference type="OrthoDB" id="9803916at2"/>
<dbReference type="Proteomes" id="UP000008148">
    <property type="component" value="Chromosome"/>
</dbReference>
<dbReference type="GO" id="GO:0042781">
    <property type="term" value="F:3'-tRNA processing endoribonuclease activity"/>
    <property type="evidence" value="ECO:0007669"/>
    <property type="project" value="TreeGrafter"/>
</dbReference>
<dbReference type="GO" id="GO:0004527">
    <property type="term" value="F:exonuclease activity"/>
    <property type="evidence" value="ECO:0007669"/>
    <property type="project" value="UniProtKB-UniRule"/>
</dbReference>
<dbReference type="GO" id="GO:0008270">
    <property type="term" value="F:zinc ion binding"/>
    <property type="evidence" value="ECO:0007669"/>
    <property type="project" value="UniProtKB-UniRule"/>
</dbReference>
<dbReference type="CDD" id="cd07717">
    <property type="entry name" value="RNaseZ_ZiPD-like_MBL-fold"/>
    <property type="match status" value="1"/>
</dbReference>
<dbReference type="FunFam" id="3.60.15.10:FF:000002">
    <property type="entry name" value="Ribonuclease Z"/>
    <property type="match status" value="1"/>
</dbReference>
<dbReference type="Gene3D" id="3.60.15.10">
    <property type="entry name" value="Ribonuclease Z/Hydroxyacylglutathione hydrolase-like"/>
    <property type="match status" value="1"/>
</dbReference>
<dbReference type="HAMAP" id="MF_01818">
    <property type="entry name" value="RNase_Z_BN"/>
    <property type="match status" value="1"/>
</dbReference>
<dbReference type="InterPro" id="IPR001279">
    <property type="entry name" value="Metallo-B-lactamas"/>
</dbReference>
<dbReference type="InterPro" id="IPR036866">
    <property type="entry name" value="RibonucZ/Hydroxyglut_hydro"/>
</dbReference>
<dbReference type="InterPro" id="IPR013469">
    <property type="entry name" value="Rnase_BN"/>
</dbReference>
<dbReference type="InterPro" id="IPR013471">
    <property type="entry name" value="RNase_Z/BN"/>
</dbReference>
<dbReference type="NCBIfam" id="NF000800">
    <property type="entry name" value="PRK00055.1-1"/>
    <property type="match status" value="1"/>
</dbReference>
<dbReference type="NCBIfam" id="NF000801">
    <property type="entry name" value="PRK00055.1-3"/>
    <property type="match status" value="1"/>
</dbReference>
<dbReference type="NCBIfam" id="TIGR02651">
    <property type="entry name" value="RNase_Z"/>
    <property type="match status" value="1"/>
</dbReference>
<dbReference type="NCBIfam" id="TIGR02649">
    <property type="entry name" value="true_RNase_BN"/>
    <property type="match status" value="1"/>
</dbReference>
<dbReference type="PANTHER" id="PTHR46018">
    <property type="entry name" value="ZINC PHOSPHODIESTERASE ELAC PROTEIN 1"/>
    <property type="match status" value="1"/>
</dbReference>
<dbReference type="PANTHER" id="PTHR46018:SF2">
    <property type="entry name" value="ZINC PHOSPHODIESTERASE ELAC PROTEIN 1"/>
    <property type="match status" value="1"/>
</dbReference>
<dbReference type="Pfam" id="PF12706">
    <property type="entry name" value="Lactamase_B_2"/>
    <property type="match status" value="2"/>
</dbReference>
<dbReference type="SMART" id="SM00849">
    <property type="entry name" value="Lactamase_B"/>
    <property type="match status" value="1"/>
</dbReference>
<dbReference type="SUPFAM" id="SSF56281">
    <property type="entry name" value="Metallo-hydrolase/oxidoreductase"/>
    <property type="match status" value="1"/>
</dbReference>
<gene>
    <name evidence="1" type="primary">rbn</name>
    <name type="synonym">rnz</name>
    <name type="ordered locus">CKO_00522</name>
</gene>
<proteinExistence type="inferred from homology"/>
<organism>
    <name type="scientific">Citrobacter koseri (strain ATCC BAA-895 / CDC 4225-83 / SGSC4696)</name>
    <dbReference type="NCBI Taxonomy" id="290338"/>
    <lineage>
        <taxon>Bacteria</taxon>
        <taxon>Pseudomonadati</taxon>
        <taxon>Pseudomonadota</taxon>
        <taxon>Gammaproteobacteria</taxon>
        <taxon>Enterobacterales</taxon>
        <taxon>Enterobacteriaceae</taxon>
        <taxon>Citrobacter</taxon>
    </lineage>
</organism>
<protein>
    <recommendedName>
        <fullName evidence="1">Ribonuclease BN</fullName>
        <shortName evidence="1">RNase BN</shortName>
        <ecNumber evidence="1">3.1.-.-</ecNumber>
    </recommendedName>
    <alternativeName>
        <fullName evidence="1">Ribonuclease Z homolog</fullName>
        <shortName evidence="1">RNase Z homolog</shortName>
    </alternativeName>
</protein>
<comment type="function">
    <text evidence="1">Zinc phosphodiesterase, which has both exoribonuclease and endoribonuclease activities.</text>
</comment>
<comment type="cofactor">
    <cofactor evidence="1">
        <name>Zn(2+)</name>
        <dbReference type="ChEBI" id="CHEBI:29105"/>
    </cofactor>
    <text evidence="1">Binds 2 Zn(2+) ions.</text>
</comment>
<comment type="subunit">
    <text evidence="1">Homodimer.</text>
</comment>
<comment type="similarity">
    <text evidence="1">Belongs to the RNase Z family. RNase BN subfamily.</text>
</comment>
<evidence type="ECO:0000255" key="1">
    <source>
        <dbReference type="HAMAP-Rule" id="MF_01818"/>
    </source>
</evidence>